<proteinExistence type="evidence at transcript level"/>
<feature type="chain" id="PRO_0000067296" description="Flavonol synthase/flavanone 3-hydroxylase">
    <location>
        <begin position="1"/>
        <end position="348"/>
    </location>
</feature>
<feature type="domain" description="Fe2OG dioxygenase" evidence="2">
    <location>
        <begin position="209"/>
        <end position="309"/>
    </location>
</feature>
<feature type="binding site" evidence="2">
    <location>
        <position position="234"/>
    </location>
    <ligand>
        <name>Fe cation</name>
        <dbReference type="ChEBI" id="CHEBI:24875"/>
    </ligand>
</feature>
<feature type="binding site" evidence="2">
    <location>
        <position position="236"/>
    </location>
    <ligand>
        <name>Fe cation</name>
        <dbReference type="ChEBI" id="CHEBI:24875"/>
    </ligand>
</feature>
<feature type="binding site" evidence="2">
    <location>
        <position position="290"/>
    </location>
    <ligand>
        <name>Fe cation</name>
        <dbReference type="ChEBI" id="CHEBI:24875"/>
    </ligand>
</feature>
<dbReference type="EC" id="1.14.11.9" evidence="1"/>
<dbReference type="EC" id="1.14.20.6" evidence="1"/>
<dbReference type="EMBL" id="Z22543">
    <property type="protein sequence ID" value="CAA80264.1"/>
    <property type="molecule type" value="mRNA"/>
</dbReference>
<dbReference type="PIR" id="S33510">
    <property type="entry name" value="S33510"/>
</dbReference>
<dbReference type="SMR" id="Q07512"/>
<dbReference type="BRENDA" id="1.14.11.9">
    <property type="organism ID" value="4700"/>
</dbReference>
<dbReference type="BRENDA" id="1.14.20.6">
    <property type="organism ID" value="4700"/>
</dbReference>
<dbReference type="UniPathway" id="UPA00154"/>
<dbReference type="GO" id="GO:0005737">
    <property type="term" value="C:cytoplasm"/>
    <property type="evidence" value="ECO:0007669"/>
    <property type="project" value="UniProtKB-SubCell"/>
</dbReference>
<dbReference type="GO" id="GO:0045486">
    <property type="term" value="F:flavanone 3-dioxygenase activity"/>
    <property type="evidence" value="ECO:0007669"/>
    <property type="project" value="UniProtKB-EC"/>
</dbReference>
<dbReference type="GO" id="GO:0045431">
    <property type="term" value="F:flavonol synthase activity"/>
    <property type="evidence" value="ECO:0007669"/>
    <property type="project" value="UniProtKB-EC"/>
</dbReference>
<dbReference type="GO" id="GO:0031418">
    <property type="term" value="F:L-ascorbic acid binding"/>
    <property type="evidence" value="ECO:0007669"/>
    <property type="project" value="UniProtKB-KW"/>
</dbReference>
<dbReference type="GO" id="GO:0046872">
    <property type="term" value="F:metal ion binding"/>
    <property type="evidence" value="ECO:0007669"/>
    <property type="project" value="UniProtKB-KW"/>
</dbReference>
<dbReference type="GO" id="GO:0009805">
    <property type="term" value="P:coumarin biosynthetic process"/>
    <property type="evidence" value="ECO:0007669"/>
    <property type="project" value="UniProtKB-ARBA"/>
</dbReference>
<dbReference type="GO" id="GO:0002238">
    <property type="term" value="P:response to molecule of fungal origin"/>
    <property type="evidence" value="ECO:0007669"/>
    <property type="project" value="UniProtKB-ARBA"/>
</dbReference>
<dbReference type="FunFam" id="2.60.120.330:FF:000009">
    <property type="entry name" value="Flavonol synthase"/>
    <property type="match status" value="1"/>
</dbReference>
<dbReference type="Gene3D" id="2.60.120.330">
    <property type="entry name" value="B-lactam Antibiotic, Isopenicillin N Synthase, Chain"/>
    <property type="match status" value="1"/>
</dbReference>
<dbReference type="InterPro" id="IPR026992">
    <property type="entry name" value="DIOX_N"/>
</dbReference>
<dbReference type="InterPro" id="IPR044861">
    <property type="entry name" value="IPNS-like_FE2OG_OXY"/>
</dbReference>
<dbReference type="InterPro" id="IPR027443">
    <property type="entry name" value="IPNS-like_sf"/>
</dbReference>
<dbReference type="InterPro" id="IPR005123">
    <property type="entry name" value="Oxoglu/Fe-dep_dioxygenase_dom"/>
</dbReference>
<dbReference type="InterPro" id="IPR050295">
    <property type="entry name" value="Plant_2OG-oxidoreductases"/>
</dbReference>
<dbReference type="PANTHER" id="PTHR47991">
    <property type="entry name" value="OXOGLUTARATE/IRON-DEPENDENT DIOXYGENASE"/>
    <property type="match status" value="1"/>
</dbReference>
<dbReference type="Pfam" id="PF03171">
    <property type="entry name" value="2OG-FeII_Oxy"/>
    <property type="match status" value="1"/>
</dbReference>
<dbReference type="Pfam" id="PF14226">
    <property type="entry name" value="DIOX_N"/>
    <property type="match status" value="1"/>
</dbReference>
<dbReference type="PRINTS" id="PR00682">
    <property type="entry name" value="IPNSYNTHASE"/>
</dbReference>
<dbReference type="SUPFAM" id="SSF51197">
    <property type="entry name" value="Clavaminate synthase-like"/>
    <property type="match status" value="1"/>
</dbReference>
<dbReference type="PROSITE" id="PS51471">
    <property type="entry name" value="FE2OG_OXY"/>
    <property type="match status" value="1"/>
</dbReference>
<keyword id="KW-0963">Cytoplasm</keyword>
<keyword id="KW-0223">Dioxygenase</keyword>
<keyword id="KW-0284">Flavonoid biosynthesis</keyword>
<keyword id="KW-0408">Iron</keyword>
<keyword id="KW-0479">Metal-binding</keyword>
<keyword id="KW-0560">Oxidoreductase</keyword>
<keyword id="KW-0847">Vitamin C</keyword>
<comment type="function">
    <text>Catalyzes the formation of flavonols from dihydroflavonols. It can act on dihydrokaempferol to produce kaempferol, on dihydroquercetin to produce quercitin and on dihydromyricetin to produce myricetin.</text>
</comment>
<comment type="catalytic activity">
    <reaction evidence="1">
        <text>a (2R,3R)-dihydroflavonol + 2-oxoglutarate + O2 = a flavonol + succinate + CO2 + H2O</text>
        <dbReference type="Rhea" id="RHEA:21088"/>
        <dbReference type="ChEBI" id="CHEBI:15377"/>
        <dbReference type="ChEBI" id="CHEBI:15379"/>
        <dbReference type="ChEBI" id="CHEBI:16526"/>
        <dbReference type="ChEBI" id="CHEBI:16810"/>
        <dbReference type="ChEBI" id="CHEBI:28802"/>
        <dbReference type="ChEBI" id="CHEBI:30031"/>
        <dbReference type="ChEBI" id="CHEBI:138188"/>
        <dbReference type="EC" id="1.14.20.6"/>
    </reaction>
</comment>
<comment type="catalytic activity">
    <reaction evidence="1">
        <text>a (2S)-flavan-4-one + 2-oxoglutarate + O2 = a (2R,3R)-dihydroflavonol + succinate + CO2</text>
        <dbReference type="Rhea" id="RHEA:18621"/>
        <dbReference type="ChEBI" id="CHEBI:15379"/>
        <dbReference type="ChEBI" id="CHEBI:16526"/>
        <dbReference type="ChEBI" id="CHEBI:16810"/>
        <dbReference type="ChEBI" id="CHEBI:30031"/>
        <dbReference type="ChEBI" id="CHEBI:138188"/>
        <dbReference type="ChEBI" id="CHEBI:140377"/>
        <dbReference type="EC" id="1.14.11.9"/>
    </reaction>
</comment>
<comment type="cofactor">
    <cofactor>
        <name>L-ascorbate</name>
        <dbReference type="ChEBI" id="CHEBI:38290"/>
    </cofactor>
    <text>Binds 1 ascorbate molecule per subunit.</text>
</comment>
<comment type="cofactor">
    <cofactor>
        <name>Fe cation</name>
        <dbReference type="ChEBI" id="CHEBI:24875"/>
    </cofactor>
    <text>Binds 1 Fe cation per subunit.</text>
</comment>
<comment type="pathway">
    <text>Secondary metabolite biosynthesis; flavonoid biosynthesis.</text>
</comment>
<comment type="subcellular location">
    <subcellularLocation>
        <location>Cytoplasm</location>
    </subcellularLocation>
</comment>
<comment type="developmental stage">
    <text>Expressed at highest level during the first stage of flower development.</text>
</comment>
<comment type="similarity">
    <text evidence="3">Belongs to the iron/ascorbate-dependent oxidoreductase family.</text>
</comment>
<sequence length="348" mass="39427">MKTAQGVSATLTMEVARVQAIASLSKCMDTIPSEYIRSENEQPAATTLHGVVLQVPVIDLRDPDENKMVKLIADASKEWGIFQLINHGIPDEAIADLQKVGKEFFEHVPQEEKELIAKTPGSNDIEGYGTSLQKEVEGKKGWVDHLFHKIWPPSAVNYRYWPKNPPSYREANEEYGKRMREVVDRIFKSLSLGLGLEGHEMIEAAGGDEIVYLLKINYYPPCPRPDLALGVVAHTDMSYITILVPNEVQGLQVFKDGHWYDVKYIPNALIVHIGDQVEILSNGKYKSVYHRTTVNKDKTRMSWPVFLEPPSEHEVGPIPKLLSEANPPKFKTKKYKDYVYCKLNKLPQ</sequence>
<organism>
    <name type="scientific">Petunia hybrida</name>
    <name type="common">Petunia</name>
    <dbReference type="NCBI Taxonomy" id="4102"/>
    <lineage>
        <taxon>Eukaryota</taxon>
        <taxon>Viridiplantae</taxon>
        <taxon>Streptophyta</taxon>
        <taxon>Embryophyta</taxon>
        <taxon>Tracheophyta</taxon>
        <taxon>Spermatophyta</taxon>
        <taxon>Magnoliopsida</taxon>
        <taxon>eudicotyledons</taxon>
        <taxon>Gunneridae</taxon>
        <taxon>Pentapetalae</taxon>
        <taxon>asterids</taxon>
        <taxon>lamiids</taxon>
        <taxon>Solanales</taxon>
        <taxon>Solanaceae</taxon>
        <taxon>Petunioideae</taxon>
        <taxon>Petunia</taxon>
    </lineage>
</organism>
<gene>
    <name type="primary">FL</name>
</gene>
<name>FLS_PETHY</name>
<evidence type="ECO:0000250" key="1">
    <source>
        <dbReference type="UniProtKB" id="Q7XZQ6"/>
    </source>
</evidence>
<evidence type="ECO:0000255" key="2">
    <source>
        <dbReference type="PROSITE-ProRule" id="PRU00805"/>
    </source>
</evidence>
<evidence type="ECO:0000305" key="3"/>
<reference key="1">
    <citation type="journal article" date="1993" name="Plant J.">
        <title>Cloning and expression of flavonol synthase from Petunia hybrida.</title>
        <authorList>
            <person name="Holton T.A."/>
            <person name="Brugliera F."/>
            <person name="Tanaka Y."/>
        </authorList>
    </citation>
    <scope>NUCLEOTIDE SEQUENCE [MRNA]</scope>
    <source>
        <strain>cv. Old Glory Blue</strain>
        <tissue>Petal</tissue>
    </source>
</reference>
<accession>Q07512</accession>
<protein>
    <recommendedName>
        <fullName>Flavonol synthase/flavanone 3-hydroxylase</fullName>
        <shortName>FLS</shortName>
        <ecNumber evidence="1">1.14.11.9</ecNumber>
        <ecNumber evidence="1">1.14.20.6</ecNumber>
    </recommendedName>
</protein>